<reference key="1">
    <citation type="journal article" date="2008" name="J. Proteomics">
        <title>A proteomics approach to identify proteins differentially expressed in Douglas-fir seedlings infected by Phellinus sulphurascens.</title>
        <authorList>
            <person name="Islam M.A."/>
            <person name="Sturrock R.N."/>
            <person name="Ekramoddoullah A.K.M."/>
        </authorList>
    </citation>
    <scope>IDENTIFICATION BY MASS SPECTROMETRY</scope>
</reference>
<proteinExistence type="evidence at protein level"/>
<accession>P85899</accession>
<protein>
    <recommendedName>
        <fullName>Unknown protein 7</fullName>
    </recommendedName>
</protein>
<organism>
    <name type="scientific">Pseudotsuga menziesii</name>
    <name type="common">Douglas-fir</name>
    <name type="synonym">Abies menziesii</name>
    <dbReference type="NCBI Taxonomy" id="3357"/>
    <lineage>
        <taxon>Eukaryota</taxon>
        <taxon>Viridiplantae</taxon>
        <taxon>Streptophyta</taxon>
        <taxon>Embryophyta</taxon>
        <taxon>Tracheophyta</taxon>
        <taxon>Spermatophyta</taxon>
        <taxon>Pinopsida</taxon>
        <taxon>Pinidae</taxon>
        <taxon>Conifers I</taxon>
        <taxon>Pinales</taxon>
        <taxon>Pinaceae</taxon>
        <taxon>Pseudotsuga</taxon>
    </lineage>
</organism>
<name>UP07_PSEMZ</name>
<sequence length="25" mass="2788">MENGKVHVASMSGLSMPHMNEMLEK</sequence>
<feature type="chain" id="PRO_0000347294" description="Unknown protein 7">
    <location>
        <begin position="1" status="less than"/>
        <end position="25" status="greater than"/>
    </location>
</feature>
<feature type="region of interest" description="Disordered" evidence="1">
    <location>
        <begin position="1"/>
        <end position="25"/>
    </location>
</feature>
<feature type="non-consecutive residues" evidence="2">
    <location>
        <begin position="8"/>
        <end position="9"/>
    </location>
</feature>
<feature type="non-terminal residue" evidence="2">
    <location>
        <position position="1"/>
    </location>
</feature>
<feature type="non-terminal residue" evidence="2">
    <location>
        <position position="25"/>
    </location>
</feature>
<evidence type="ECO:0000256" key="1">
    <source>
        <dbReference type="SAM" id="MobiDB-lite"/>
    </source>
</evidence>
<evidence type="ECO:0000303" key="2">
    <source>
    </source>
</evidence>